<keyword id="KW-0030">Aminoacyl-tRNA synthetase</keyword>
<keyword id="KW-0067">ATP-binding</keyword>
<keyword id="KW-0963">Cytoplasm</keyword>
<keyword id="KW-0436">Ligase</keyword>
<keyword id="KW-0547">Nucleotide-binding</keyword>
<keyword id="KW-0648">Protein biosynthesis</keyword>
<gene>
    <name evidence="1" type="primary">trpS</name>
    <name type="ordered locus">XF_0428</name>
</gene>
<dbReference type="EC" id="6.1.1.2" evidence="1"/>
<dbReference type="EMBL" id="AE003849">
    <property type="protein sequence ID" value="AAF83238.1"/>
    <property type="molecule type" value="Genomic_DNA"/>
</dbReference>
<dbReference type="PIR" id="E82806">
    <property type="entry name" value="E82806"/>
</dbReference>
<dbReference type="SMR" id="Q9PG74"/>
<dbReference type="STRING" id="160492.XF_0428"/>
<dbReference type="KEGG" id="xfa:XF_0428"/>
<dbReference type="eggNOG" id="COG0180">
    <property type="taxonomic scope" value="Bacteria"/>
</dbReference>
<dbReference type="HOGENOM" id="CLU_029244_5_1_6"/>
<dbReference type="Proteomes" id="UP000000812">
    <property type="component" value="Chromosome"/>
</dbReference>
<dbReference type="GO" id="GO:0005829">
    <property type="term" value="C:cytosol"/>
    <property type="evidence" value="ECO:0007669"/>
    <property type="project" value="TreeGrafter"/>
</dbReference>
<dbReference type="GO" id="GO:0005524">
    <property type="term" value="F:ATP binding"/>
    <property type="evidence" value="ECO:0007669"/>
    <property type="project" value="UniProtKB-UniRule"/>
</dbReference>
<dbReference type="GO" id="GO:0004830">
    <property type="term" value="F:tryptophan-tRNA ligase activity"/>
    <property type="evidence" value="ECO:0007669"/>
    <property type="project" value="UniProtKB-UniRule"/>
</dbReference>
<dbReference type="GO" id="GO:0006436">
    <property type="term" value="P:tryptophanyl-tRNA aminoacylation"/>
    <property type="evidence" value="ECO:0007669"/>
    <property type="project" value="UniProtKB-UniRule"/>
</dbReference>
<dbReference type="CDD" id="cd00806">
    <property type="entry name" value="TrpRS_core"/>
    <property type="match status" value="1"/>
</dbReference>
<dbReference type="FunFam" id="1.10.240.10:FF:000005">
    <property type="entry name" value="Tryptophan--tRNA ligase"/>
    <property type="match status" value="1"/>
</dbReference>
<dbReference type="FunFam" id="3.40.50.620:FF:000144">
    <property type="entry name" value="Tryptophan--tRNA ligase"/>
    <property type="match status" value="1"/>
</dbReference>
<dbReference type="Gene3D" id="3.40.50.620">
    <property type="entry name" value="HUPs"/>
    <property type="match status" value="1"/>
</dbReference>
<dbReference type="Gene3D" id="1.10.240.10">
    <property type="entry name" value="Tyrosyl-Transfer RNA Synthetase"/>
    <property type="match status" value="1"/>
</dbReference>
<dbReference type="HAMAP" id="MF_00140_B">
    <property type="entry name" value="Trp_tRNA_synth_B"/>
    <property type="match status" value="1"/>
</dbReference>
<dbReference type="InterPro" id="IPR002305">
    <property type="entry name" value="aa-tRNA-synth_Ic"/>
</dbReference>
<dbReference type="InterPro" id="IPR014729">
    <property type="entry name" value="Rossmann-like_a/b/a_fold"/>
</dbReference>
<dbReference type="InterPro" id="IPR002306">
    <property type="entry name" value="Trp-tRNA-ligase"/>
</dbReference>
<dbReference type="InterPro" id="IPR024109">
    <property type="entry name" value="Trp-tRNA-ligase_bac-type"/>
</dbReference>
<dbReference type="InterPro" id="IPR050203">
    <property type="entry name" value="Trp-tRNA_synthetase"/>
</dbReference>
<dbReference type="InterPro" id="IPR036913">
    <property type="entry name" value="YegP-like_sf"/>
</dbReference>
<dbReference type="NCBIfam" id="NF008923">
    <property type="entry name" value="PRK12284.1"/>
    <property type="match status" value="1"/>
</dbReference>
<dbReference type="NCBIfam" id="TIGR00233">
    <property type="entry name" value="trpS"/>
    <property type="match status" value="1"/>
</dbReference>
<dbReference type="PANTHER" id="PTHR43766">
    <property type="entry name" value="TRYPTOPHAN--TRNA LIGASE, MITOCHONDRIAL"/>
    <property type="match status" value="1"/>
</dbReference>
<dbReference type="PANTHER" id="PTHR43766:SF1">
    <property type="entry name" value="TRYPTOPHAN--TRNA LIGASE, MITOCHONDRIAL"/>
    <property type="match status" value="1"/>
</dbReference>
<dbReference type="Pfam" id="PF00579">
    <property type="entry name" value="tRNA-synt_1b"/>
    <property type="match status" value="1"/>
</dbReference>
<dbReference type="PRINTS" id="PR01039">
    <property type="entry name" value="TRNASYNTHTRP"/>
</dbReference>
<dbReference type="SUPFAM" id="SSF52374">
    <property type="entry name" value="Nucleotidylyl transferase"/>
    <property type="match status" value="1"/>
</dbReference>
<dbReference type="SUPFAM" id="SSF160113">
    <property type="entry name" value="YegP-like"/>
    <property type="match status" value="1"/>
</dbReference>
<feature type="chain" id="PRO_0000136714" description="Tryptophan--tRNA ligase">
    <location>
        <begin position="1"/>
        <end position="434"/>
    </location>
</feature>
<feature type="short sequence motif" description="'HIGH' region" evidence="1">
    <location>
        <begin position="15"/>
        <end position="23"/>
    </location>
</feature>
<feature type="short sequence motif" description="'KMSKS' region" evidence="1">
    <location>
        <begin position="206"/>
        <end position="210"/>
    </location>
</feature>
<feature type="binding site" evidence="1">
    <location>
        <begin position="14"/>
        <end position="16"/>
    </location>
    <ligand>
        <name>ATP</name>
        <dbReference type="ChEBI" id="CHEBI:30616"/>
    </ligand>
</feature>
<feature type="binding site" evidence="1">
    <location>
        <begin position="22"/>
        <end position="23"/>
    </location>
    <ligand>
        <name>ATP</name>
        <dbReference type="ChEBI" id="CHEBI:30616"/>
    </ligand>
</feature>
<feature type="binding site" evidence="1">
    <location>
        <position position="147"/>
    </location>
    <ligand>
        <name>L-tryptophan</name>
        <dbReference type="ChEBI" id="CHEBI:57912"/>
    </ligand>
</feature>
<feature type="binding site" evidence="1">
    <location>
        <begin position="159"/>
        <end position="161"/>
    </location>
    <ligand>
        <name>ATP</name>
        <dbReference type="ChEBI" id="CHEBI:30616"/>
    </ligand>
</feature>
<feature type="binding site" evidence="1">
    <location>
        <position position="199"/>
    </location>
    <ligand>
        <name>ATP</name>
        <dbReference type="ChEBI" id="CHEBI:30616"/>
    </ligand>
</feature>
<feature type="binding site" evidence="1">
    <location>
        <begin position="206"/>
        <end position="210"/>
    </location>
    <ligand>
        <name>ATP</name>
        <dbReference type="ChEBI" id="CHEBI:30616"/>
    </ligand>
</feature>
<organism>
    <name type="scientific">Xylella fastidiosa (strain 9a5c)</name>
    <dbReference type="NCBI Taxonomy" id="160492"/>
    <lineage>
        <taxon>Bacteria</taxon>
        <taxon>Pseudomonadati</taxon>
        <taxon>Pseudomonadota</taxon>
        <taxon>Gammaproteobacteria</taxon>
        <taxon>Lysobacterales</taxon>
        <taxon>Lysobacteraceae</taxon>
        <taxon>Xylella</taxon>
    </lineage>
</organism>
<reference key="1">
    <citation type="journal article" date="2000" name="Nature">
        <title>The genome sequence of the plant pathogen Xylella fastidiosa.</title>
        <authorList>
            <person name="Simpson A.J.G."/>
            <person name="Reinach F.C."/>
            <person name="Arruda P."/>
            <person name="Abreu F.A."/>
            <person name="Acencio M."/>
            <person name="Alvarenga R."/>
            <person name="Alves L.M.C."/>
            <person name="Araya J.E."/>
            <person name="Baia G.S."/>
            <person name="Baptista C.S."/>
            <person name="Barros M.H."/>
            <person name="Bonaccorsi E.D."/>
            <person name="Bordin S."/>
            <person name="Bove J.M."/>
            <person name="Briones M.R.S."/>
            <person name="Bueno M.R.P."/>
            <person name="Camargo A.A."/>
            <person name="Camargo L.E.A."/>
            <person name="Carraro D.M."/>
            <person name="Carrer H."/>
            <person name="Colauto N.B."/>
            <person name="Colombo C."/>
            <person name="Costa F.F."/>
            <person name="Costa M.C.R."/>
            <person name="Costa-Neto C.M."/>
            <person name="Coutinho L.L."/>
            <person name="Cristofani M."/>
            <person name="Dias-Neto E."/>
            <person name="Docena C."/>
            <person name="El-Dorry H."/>
            <person name="Facincani A.P."/>
            <person name="Ferreira A.J.S."/>
            <person name="Ferreira V.C.A."/>
            <person name="Ferro J.A."/>
            <person name="Fraga J.S."/>
            <person name="Franca S.C."/>
            <person name="Franco M.C."/>
            <person name="Frohme M."/>
            <person name="Furlan L.R."/>
            <person name="Garnier M."/>
            <person name="Goldman G.H."/>
            <person name="Goldman M.H.S."/>
            <person name="Gomes S.L."/>
            <person name="Gruber A."/>
            <person name="Ho P.L."/>
            <person name="Hoheisel J.D."/>
            <person name="Junqueira M.L."/>
            <person name="Kemper E.L."/>
            <person name="Kitajima J.P."/>
            <person name="Krieger J.E."/>
            <person name="Kuramae E.E."/>
            <person name="Laigret F."/>
            <person name="Lambais M.R."/>
            <person name="Leite L.C.C."/>
            <person name="Lemos E.G.M."/>
            <person name="Lemos M.V.F."/>
            <person name="Lopes S.A."/>
            <person name="Lopes C.R."/>
            <person name="Machado J.A."/>
            <person name="Machado M.A."/>
            <person name="Madeira A.M.B.N."/>
            <person name="Madeira H.M.F."/>
            <person name="Marino C.L."/>
            <person name="Marques M.V."/>
            <person name="Martins E.A.L."/>
            <person name="Martins E.M.F."/>
            <person name="Matsukuma A.Y."/>
            <person name="Menck C.F.M."/>
            <person name="Miracca E.C."/>
            <person name="Miyaki C.Y."/>
            <person name="Monteiro-Vitorello C.B."/>
            <person name="Moon D.H."/>
            <person name="Nagai M.A."/>
            <person name="Nascimento A.L.T.O."/>
            <person name="Netto L.E.S."/>
            <person name="Nhani A. Jr."/>
            <person name="Nobrega F.G."/>
            <person name="Nunes L.R."/>
            <person name="Oliveira M.A."/>
            <person name="de Oliveira M.C."/>
            <person name="de Oliveira R.C."/>
            <person name="Palmieri D.A."/>
            <person name="Paris A."/>
            <person name="Peixoto B.R."/>
            <person name="Pereira G.A.G."/>
            <person name="Pereira H.A. Jr."/>
            <person name="Pesquero J.B."/>
            <person name="Quaggio R.B."/>
            <person name="Roberto P.G."/>
            <person name="Rodrigues V."/>
            <person name="de Rosa A.J.M."/>
            <person name="de Rosa V.E. Jr."/>
            <person name="de Sa R.G."/>
            <person name="Santelli R.V."/>
            <person name="Sawasaki H.E."/>
            <person name="da Silva A.C.R."/>
            <person name="da Silva A.M."/>
            <person name="da Silva F.R."/>
            <person name="Silva W.A. Jr."/>
            <person name="da Silveira J.F."/>
            <person name="Silvestri M.L.Z."/>
            <person name="Siqueira W.J."/>
            <person name="de Souza A.A."/>
            <person name="de Souza A.P."/>
            <person name="Terenzi M.F."/>
            <person name="Truffi D."/>
            <person name="Tsai S.M."/>
            <person name="Tsuhako M.H."/>
            <person name="Vallada H."/>
            <person name="Van Sluys M.A."/>
            <person name="Verjovski-Almeida S."/>
            <person name="Vettore A.L."/>
            <person name="Zago M.A."/>
            <person name="Zatz M."/>
            <person name="Meidanis J."/>
            <person name="Setubal J.C."/>
        </authorList>
    </citation>
    <scope>NUCLEOTIDE SEQUENCE [LARGE SCALE GENOMIC DNA]</scope>
    <source>
        <strain>9a5c</strain>
    </source>
</reference>
<accession>Q9PG74</accession>
<evidence type="ECO:0000255" key="1">
    <source>
        <dbReference type="HAMAP-Rule" id="MF_00140"/>
    </source>
</evidence>
<proteinExistence type="inferred from homology"/>
<protein>
    <recommendedName>
        <fullName evidence="1">Tryptophan--tRNA ligase</fullName>
        <ecNumber evidence="1">6.1.1.2</ecNumber>
    </recommendedName>
    <alternativeName>
        <fullName evidence="1">Tryptophanyl-tRNA synthetase</fullName>
        <shortName evidence="1">TrpRS</shortName>
    </alternativeName>
</protein>
<comment type="function">
    <text evidence="1">Catalyzes the attachment of tryptophan to tRNA(Trp).</text>
</comment>
<comment type="catalytic activity">
    <reaction evidence="1">
        <text>tRNA(Trp) + L-tryptophan + ATP = L-tryptophyl-tRNA(Trp) + AMP + diphosphate + H(+)</text>
        <dbReference type="Rhea" id="RHEA:24080"/>
        <dbReference type="Rhea" id="RHEA-COMP:9671"/>
        <dbReference type="Rhea" id="RHEA-COMP:9705"/>
        <dbReference type="ChEBI" id="CHEBI:15378"/>
        <dbReference type="ChEBI" id="CHEBI:30616"/>
        <dbReference type="ChEBI" id="CHEBI:33019"/>
        <dbReference type="ChEBI" id="CHEBI:57912"/>
        <dbReference type="ChEBI" id="CHEBI:78442"/>
        <dbReference type="ChEBI" id="CHEBI:78535"/>
        <dbReference type="ChEBI" id="CHEBI:456215"/>
        <dbReference type="EC" id="6.1.1.2"/>
    </reaction>
</comment>
<comment type="subunit">
    <text evidence="1">Homodimer.</text>
</comment>
<comment type="subcellular location">
    <subcellularLocation>
        <location evidence="1">Cytoplasm</location>
    </subcellularLocation>
</comment>
<comment type="similarity">
    <text evidence="1">Belongs to the class-I aminoacyl-tRNA synthetase family.</text>
</comment>
<name>SYW_XYLFA</name>
<sequence>MGHFMSIRVLTGITTSGTPHLGNYVGAIRPAIRAAGAPGTESFYFLADLHSLIKVQDPERTQRSTLEIAATWLACGLDPEKVWLYRQSDVPEITELMWLLTCVAGKGILNRAHAYKAVVDKNRSEGGDDDAGITAGLFMYPVLMAADILLFNAHQVPVGRDQIQHIEMARDFAQRFNHIYGGEYFVLPEAAIDEQVATLPGLDGRKMSKSYGNTMPLFCTREELKKYVFSIVTDSRAPGEPKEAVGSAVFQLYQAFAGVEECSMFAQALAEGLGWGEAKVRLFERIDAEVAPLRERYEDFMRRPADIEAMLCDSAGRLRERDAIPLLARLREAVGLRSLSLCMASAVPVPQEKVALPVLKQYREQDGRFYFKLIDGQGAVLVQSRGFASPRDAGQWIALFKQAVSAEALVSPMLEPVADPVVVLAALRRLREAG</sequence>